<gene>
    <name type="primary">Cyp2a2</name>
    <name type="synonym">Cyp2a-2</name>
</gene>
<sequence>MLDTGLLLVVILASLSVMFLVSLWQQKIRERLPPGPTPLPFIGNYLQLNMKDVYSSITQLSERYGPVFTIHLGPRRIVVLYGYDAVKEALVDQAEEFSGRGELPTFNILFKGYGFSLSNVEQAKRIRRFTIATLRDFGVGKRDVQECILEEAGYLIKTLQGTCGAPIDPSIYLSKTVSNVINSIVFGNRFDYEDKEFLSLLEMIDEMNIFAASATGQLYDMFHSVMKYLPGPQQQIIKVTQKLEDFMIEKVRQNHSTLDPNSPRNFIDSFLIRMQEEKYVNSEFHMNNLVMSSLGLLFAGTGSVSSTLYHGFLLLMKHPDVEAKVHEEIERVIGRNRQPQYEDHMKMPYTQAVINEIQRFSNLAPLGIPRRIIKNTTFRGFFLPKGTDVFPIIGSLMTEPKFFPNHKDFNPQHFLDDKGQLKKNAAFLPFSIGKRFCLGDSLAKMELFLLLTTILQNFRFKFPMNLEDINEYPSPIGFTRIIPNYTMSFMPI</sequence>
<keyword id="KW-0903">Direct protein sequencing</keyword>
<keyword id="KW-0256">Endoplasmic reticulum</keyword>
<keyword id="KW-0349">Heme</keyword>
<keyword id="KW-0408">Iron</keyword>
<keyword id="KW-0472">Membrane</keyword>
<keyword id="KW-0479">Metal-binding</keyword>
<keyword id="KW-0492">Microsome</keyword>
<keyword id="KW-0503">Monooxygenase</keyword>
<keyword id="KW-0560">Oxidoreductase</keyword>
<keyword id="KW-1185">Reference proteome</keyword>
<reference key="1">
    <citation type="journal article" date="1988" name="J. Biol. Chem.">
        <title>Gene conversion and differential regulation in the rat P-450 IIA gene subfamily. Purification, catalytic activity, cDNA and deduced amino acid sequence, and regulation of an adult male-specific hepatic testosterone 15 alpha-hydroxylase.</title>
        <authorList>
            <person name="Matsunaga T."/>
            <person name="Nagata K."/>
            <person name="Holsztynska E.J."/>
            <person name="Lapenson D.P."/>
            <person name="Smith A."/>
            <person name="Kato R."/>
            <person name="Gelboin H.V."/>
            <person name="Waxman D.J."/>
            <person name="Gonzalez F.J."/>
        </authorList>
    </citation>
    <scope>NUCLEOTIDE SEQUENCE [MRNA]</scope>
    <source>
        <tissue>Liver</tissue>
    </source>
</reference>
<reference key="2">
    <citation type="journal article" date="1990" name="Biochemistry">
        <title>Structure and in vitro transcription of the rat CYP2A1 and CYP2A2 genes and regional localization of the CYP2A gene subfamily on mouse chromosome 7.</title>
        <authorList>
            <person name="Matsunaga T."/>
            <person name="Nomoto M."/>
            <person name="Kozak C.A."/>
            <person name="Gonzalez F.J."/>
        </authorList>
    </citation>
    <scope>NUCLEOTIDE SEQUENCE [GENOMIC DNA]</scope>
</reference>
<reference key="3">
    <citation type="journal article" date="2004" name="Genome Res.">
        <title>The status, quality, and expansion of the NIH full-length cDNA project: the Mammalian Gene Collection (MGC).</title>
        <authorList>
            <consortium name="The MGC Project Team"/>
        </authorList>
    </citation>
    <scope>NUCLEOTIDE SEQUENCE [LARGE SCALE MRNA]</scope>
    <source>
        <tissue>Liver</tissue>
    </source>
</reference>
<reference key="4">
    <citation type="journal article" date="1986" name="J. Biochem.">
        <title>Purification and characterization of three male-specific and one female-specific forms of cytochrome P-450 from rat liver microsomes.</title>
        <authorList>
            <person name="Matsumoto T."/>
            <person name="Emi Y."/>
            <person name="Kawabata S."/>
            <person name="Omura T."/>
        </authorList>
    </citation>
    <scope>PROTEIN SEQUENCE OF 1-27</scope>
    <source>
        <tissue>Liver</tissue>
    </source>
</reference>
<reference key="5">
    <citation type="journal article" date="1989" name="Arch. Biochem. Biophys.">
        <title>Purification of two isozymes of rat liver microsomal cytochrome P450 with testosterone 7 alpha-hydroxylase activity.</title>
        <authorList>
            <person name="Arlotto M.P."/>
            <person name="Greenway D.J."/>
            <person name="Parkinson A."/>
        </authorList>
    </citation>
    <scope>PROTEIN SEQUENCE OF 1-20</scope>
    <source>
        <tissue>Liver</tissue>
    </source>
</reference>
<proteinExistence type="evidence at protein level"/>
<organism>
    <name type="scientific">Rattus norvegicus</name>
    <name type="common">Rat</name>
    <dbReference type="NCBI Taxonomy" id="10116"/>
    <lineage>
        <taxon>Eukaryota</taxon>
        <taxon>Metazoa</taxon>
        <taxon>Chordata</taxon>
        <taxon>Craniata</taxon>
        <taxon>Vertebrata</taxon>
        <taxon>Euteleostomi</taxon>
        <taxon>Mammalia</taxon>
        <taxon>Eutheria</taxon>
        <taxon>Euarchontoglires</taxon>
        <taxon>Glires</taxon>
        <taxon>Rodentia</taxon>
        <taxon>Myomorpha</taxon>
        <taxon>Muroidea</taxon>
        <taxon>Muridae</taxon>
        <taxon>Murinae</taxon>
        <taxon>Rattus</taxon>
    </lineage>
</organism>
<evidence type="ECO:0000250" key="1"/>
<evidence type="ECO:0000305" key="2"/>
<name>CP2A2_RAT</name>
<accession>P15149</accession>
<accession>Q5EBB3</accession>
<dbReference type="EC" id="1.14.14.1"/>
<dbReference type="EMBL" id="J04187">
    <property type="protein sequence ID" value="AAA41424.1"/>
    <property type="molecule type" value="mRNA"/>
</dbReference>
<dbReference type="EMBL" id="M34392">
    <property type="protein sequence ID" value="AAA41021.1"/>
    <property type="molecule type" value="Genomic_DNA"/>
</dbReference>
<dbReference type="EMBL" id="M33313">
    <property type="protein sequence ID" value="AAA41021.1"/>
    <property type="status" value="JOINED"/>
    <property type="molecule type" value="Genomic_DNA"/>
</dbReference>
<dbReference type="EMBL" id="M33325">
    <property type="protein sequence ID" value="AAA41021.1"/>
    <property type="status" value="JOINED"/>
    <property type="molecule type" value="Genomic_DNA"/>
</dbReference>
<dbReference type="EMBL" id="BC089818">
    <property type="protein sequence ID" value="AAH89818.1"/>
    <property type="molecule type" value="mRNA"/>
</dbReference>
<dbReference type="PIR" id="B34272">
    <property type="entry name" value="A31887"/>
</dbReference>
<dbReference type="RefSeq" id="NP_036825.1">
    <property type="nucleotide sequence ID" value="NM_012693.1"/>
</dbReference>
<dbReference type="SMR" id="P15149"/>
<dbReference type="FunCoup" id="P15149">
    <property type="interactions" value="48"/>
</dbReference>
<dbReference type="STRING" id="10116.ENSRNOP00000028249"/>
<dbReference type="BindingDB" id="P15149"/>
<dbReference type="ChEMBL" id="CHEMBL3705"/>
<dbReference type="GlyGen" id="P15149">
    <property type="glycosylation" value="1 site"/>
</dbReference>
<dbReference type="PhosphoSitePlus" id="P15149"/>
<dbReference type="Ensembl" id="ENSRNOT00000085008.2">
    <property type="protein sequence ID" value="ENSRNOP00000075563.2"/>
    <property type="gene ID" value="ENSRNOG00000069320.1"/>
</dbReference>
<dbReference type="GeneID" id="24895"/>
<dbReference type="KEGG" id="rno:24895"/>
<dbReference type="AGR" id="RGD:2464"/>
<dbReference type="CTD" id="24895"/>
<dbReference type="RGD" id="2464">
    <property type="gene designation" value="Cyp2a2"/>
</dbReference>
<dbReference type="GeneTree" id="ENSGT00940000154117"/>
<dbReference type="InParanoid" id="P15149"/>
<dbReference type="OMA" id="MINEIFR"/>
<dbReference type="OrthoDB" id="2789670at2759"/>
<dbReference type="PhylomeDB" id="P15149"/>
<dbReference type="TreeFam" id="TF352043"/>
<dbReference type="Reactome" id="R-RNO-211935">
    <property type="pathway name" value="Fatty acids"/>
</dbReference>
<dbReference type="Reactome" id="R-RNO-211981">
    <property type="pathway name" value="Xenobiotics"/>
</dbReference>
<dbReference type="Reactome" id="R-RNO-211999">
    <property type="pathway name" value="CYP2E1 reactions"/>
</dbReference>
<dbReference type="PRO" id="PR:P15149"/>
<dbReference type="Proteomes" id="UP000002494">
    <property type="component" value="Chromosome 1"/>
</dbReference>
<dbReference type="GO" id="GO:0005737">
    <property type="term" value="C:cytoplasm"/>
    <property type="evidence" value="ECO:0000318"/>
    <property type="project" value="GO_Central"/>
</dbReference>
<dbReference type="GO" id="GO:0005789">
    <property type="term" value="C:endoplasmic reticulum membrane"/>
    <property type="evidence" value="ECO:0007669"/>
    <property type="project" value="UniProtKB-SubCell"/>
</dbReference>
<dbReference type="GO" id="GO:0043231">
    <property type="term" value="C:intracellular membrane-bounded organelle"/>
    <property type="evidence" value="ECO:0000318"/>
    <property type="project" value="GO_Central"/>
</dbReference>
<dbReference type="GO" id="GO:0008392">
    <property type="term" value="F:arachidonate epoxygenase activity"/>
    <property type="evidence" value="ECO:0000318"/>
    <property type="project" value="GO_Central"/>
</dbReference>
<dbReference type="GO" id="GO:0020037">
    <property type="term" value="F:heme binding"/>
    <property type="evidence" value="ECO:0000318"/>
    <property type="project" value="GO_Central"/>
</dbReference>
<dbReference type="GO" id="GO:0005506">
    <property type="term" value="F:iron ion binding"/>
    <property type="evidence" value="ECO:0007669"/>
    <property type="project" value="InterPro"/>
</dbReference>
<dbReference type="GO" id="GO:0016712">
    <property type="term" value="F:oxidoreductase activity, acting on paired donors, with incorporation or reduction of molecular oxygen, reduced flavin or flavoprotein as one donor, and incorporation of one atom of oxygen"/>
    <property type="evidence" value="ECO:0000318"/>
    <property type="project" value="GO_Central"/>
</dbReference>
<dbReference type="GO" id="GO:0008395">
    <property type="term" value="F:steroid hydroxylase activity"/>
    <property type="evidence" value="ECO:0000314"/>
    <property type="project" value="RGD"/>
</dbReference>
<dbReference type="GO" id="GO:0009804">
    <property type="term" value="P:coumarin metabolic process"/>
    <property type="evidence" value="ECO:0000318"/>
    <property type="project" value="GO_Central"/>
</dbReference>
<dbReference type="GO" id="GO:0019373">
    <property type="term" value="P:epoxygenase P450 pathway"/>
    <property type="evidence" value="ECO:0000318"/>
    <property type="project" value="GO_Central"/>
</dbReference>
<dbReference type="GO" id="GO:0006805">
    <property type="term" value="P:xenobiotic metabolic process"/>
    <property type="evidence" value="ECO:0000318"/>
    <property type="project" value="GO_Central"/>
</dbReference>
<dbReference type="CDD" id="cd20668">
    <property type="entry name" value="CYP2A"/>
    <property type="match status" value="1"/>
</dbReference>
<dbReference type="FunFam" id="1.10.630.10:FF:000238">
    <property type="entry name" value="Cytochrome P450 2A6"/>
    <property type="match status" value="1"/>
</dbReference>
<dbReference type="Gene3D" id="1.10.630.10">
    <property type="entry name" value="Cytochrome P450"/>
    <property type="match status" value="1"/>
</dbReference>
<dbReference type="InterPro" id="IPR001128">
    <property type="entry name" value="Cyt_P450"/>
</dbReference>
<dbReference type="InterPro" id="IPR017972">
    <property type="entry name" value="Cyt_P450_CS"/>
</dbReference>
<dbReference type="InterPro" id="IPR002401">
    <property type="entry name" value="Cyt_P450_E_grp-I"/>
</dbReference>
<dbReference type="InterPro" id="IPR008067">
    <property type="entry name" value="Cyt_P450_E_grp-I_CYP2A-like"/>
</dbReference>
<dbReference type="InterPro" id="IPR036396">
    <property type="entry name" value="Cyt_P450_sf"/>
</dbReference>
<dbReference type="InterPro" id="IPR050182">
    <property type="entry name" value="Cytochrome_P450_fam2"/>
</dbReference>
<dbReference type="PANTHER" id="PTHR24300">
    <property type="entry name" value="CYTOCHROME P450 508A4-RELATED"/>
    <property type="match status" value="1"/>
</dbReference>
<dbReference type="PANTHER" id="PTHR24300:SF103">
    <property type="entry name" value="CYTOCHROME P450-RELATED"/>
    <property type="match status" value="1"/>
</dbReference>
<dbReference type="Pfam" id="PF00067">
    <property type="entry name" value="p450"/>
    <property type="match status" value="1"/>
</dbReference>
<dbReference type="PRINTS" id="PR00463">
    <property type="entry name" value="EP450I"/>
</dbReference>
<dbReference type="PRINTS" id="PR01684">
    <property type="entry name" value="EP450ICYP2A"/>
</dbReference>
<dbReference type="PRINTS" id="PR00385">
    <property type="entry name" value="P450"/>
</dbReference>
<dbReference type="SUPFAM" id="SSF48264">
    <property type="entry name" value="Cytochrome P450"/>
    <property type="match status" value="1"/>
</dbReference>
<dbReference type="PROSITE" id="PS00086">
    <property type="entry name" value="CYTOCHROME_P450"/>
    <property type="match status" value="1"/>
</dbReference>
<comment type="function">
    <text>Highly active in the 15-alpha-hydroxylation of testosterone.</text>
</comment>
<comment type="catalytic activity">
    <reaction>
        <text>an organic molecule + reduced [NADPH--hemoprotein reductase] + O2 = an alcohol + oxidized [NADPH--hemoprotein reductase] + H2O + H(+)</text>
        <dbReference type="Rhea" id="RHEA:17149"/>
        <dbReference type="Rhea" id="RHEA-COMP:11964"/>
        <dbReference type="Rhea" id="RHEA-COMP:11965"/>
        <dbReference type="ChEBI" id="CHEBI:15377"/>
        <dbReference type="ChEBI" id="CHEBI:15378"/>
        <dbReference type="ChEBI" id="CHEBI:15379"/>
        <dbReference type="ChEBI" id="CHEBI:30879"/>
        <dbReference type="ChEBI" id="CHEBI:57618"/>
        <dbReference type="ChEBI" id="CHEBI:58210"/>
        <dbReference type="ChEBI" id="CHEBI:142491"/>
        <dbReference type="EC" id="1.14.14.1"/>
    </reaction>
</comment>
<comment type="cofactor">
    <cofactor evidence="1">
        <name>heme</name>
        <dbReference type="ChEBI" id="CHEBI:30413"/>
    </cofactor>
</comment>
<comment type="subcellular location">
    <subcellularLocation>
        <location>Endoplasmic reticulum membrane</location>
        <topology>Peripheral membrane protein</topology>
    </subcellularLocation>
    <subcellularLocation>
        <location>Microsome membrane</location>
        <topology>Peripheral membrane protein</topology>
    </subcellularLocation>
</comment>
<comment type="tissue specificity">
    <text>Liver specific.</text>
</comment>
<comment type="similarity">
    <text evidence="2">Belongs to the cytochrome P450 family.</text>
</comment>
<feature type="chain" id="PRO_0000051664" description="Cytochrome P450 2A2">
    <location>
        <begin position="1"/>
        <end position="492"/>
    </location>
</feature>
<feature type="binding site" description="axial binding residue">
    <location>
        <position position="437"/>
    </location>
    <ligand>
        <name>heme</name>
        <dbReference type="ChEBI" id="CHEBI:30413"/>
    </ligand>
    <ligandPart>
        <name>Fe</name>
        <dbReference type="ChEBI" id="CHEBI:18248"/>
    </ligandPart>
</feature>
<feature type="sequence conflict" description="In Ref. 4; AA sequence." evidence="2" ref="4">
    <original>T</original>
    <variation>S</variation>
    <location>
        <position position="4"/>
    </location>
</feature>
<protein>
    <recommendedName>
        <fullName>Cytochrome P450 2A2</fullName>
        <ecNumber>1.14.14.1</ecNumber>
    </recommendedName>
    <alternativeName>
        <fullName>CYPIIA2</fullName>
    </alternativeName>
    <alternativeName>
        <fullName>Cytochrome P450-UT-4</fullName>
    </alternativeName>
    <alternativeName>
        <fullName>Testosterone 15-alpha-hydroxylase</fullName>
    </alternativeName>
</protein>